<comment type="function">
    <text evidence="3 6">Efflux pump; part of the gene cluster that mediates the biosynthesis of asperlin, a polyketide showing anti-inflammatory, antitumor and antibiotic activities (PubMed:30339758). Is probably involved in the efflux of asperlin (Probable).</text>
</comment>
<comment type="subcellular location">
    <subcellularLocation>
        <location evidence="5">Cell membrane</location>
        <topology evidence="1">Multi-pass membrane protein</topology>
    </subcellularLocation>
</comment>
<comment type="induction">
    <text evidence="3">Expression is controlled by the asperlin biosynthesis cluster-specific transcription factor alnR.</text>
</comment>
<comment type="disruption phenotype">
    <text evidence="3">Strongly diminishes the production of asperlin.</text>
</comment>
<comment type="similarity">
    <text evidence="5">Belongs to the major facilitator superfamily. TCR/Tet family.</text>
</comment>
<accession>A0A1U8QYH7</accession>
<accession>C8VJR3</accession>
<accession>Q5AR61</accession>
<protein>
    <recommendedName>
        <fullName evidence="4">Efflux pump alnA</fullName>
    </recommendedName>
    <alternativeName>
        <fullName evidence="4">Asperlin biosynthesis cluster protein E</fullName>
    </alternativeName>
</protein>
<sequence length="553" mass="59134">MSSDDTVKQEHSCSADSEKQDSSCASDNEQPKEPQSPRNIHGLLWVVTILAIYSSTFLFALDNTIVANIQPAIISSLNGIEKLAWSGVAFVMASSATVLTWLQIFNQFNIKWMYIFSIAVFMGGSAICGAAQSMDMLIGGRVICGIGGVGQYVGVMNFLPRLTTMQERPMYVSAMGLTWGAGTVLGPIIGGAFTDSSAGWRWSFYINLVVGGLFAPVYIFLLPSLEPQPAGTTVSSRLKRMDLVGTLILFAAFAAGVIGINFAGAMYPWSEPGIIVAITLGGVLFIVFGIQQTYCILTTEETRLFPVELVSWRQPLLSLLFVCGCCTGVCVTVPTYVIPLYFQFTEGDESLQSGVRLLPFVCLLVFSCVSGGYLAGRLGYYIPWYIMGGGFCLIGSALMYTIKPSSGPGATYGYSSLIGLGSGMYLQLGHAVAQAKVKPEKVPAAVAFTTTAQLNGLTFALVLSQCVFVNEAAKRIGWILPHEPRSTIVDAISGTGSTFVQELPTATQNEVLGAIVTAIDRTYILCIVAAAVTLLATLGMKWERLFIEAAAAA</sequence>
<reference key="1">
    <citation type="journal article" date="2005" name="Nature">
        <title>Sequencing of Aspergillus nidulans and comparative analysis with A. fumigatus and A. oryzae.</title>
        <authorList>
            <person name="Galagan J.E."/>
            <person name="Calvo S.E."/>
            <person name="Cuomo C."/>
            <person name="Ma L.-J."/>
            <person name="Wortman J.R."/>
            <person name="Batzoglou S."/>
            <person name="Lee S.-I."/>
            <person name="Bastuerkmen M."/>
            <person name="Spevak C.C."/>
            <person name="Clutterbuck J."/>
            <person name="Kapitonov V."/>
            <person name="Jurka J."/>
            <person name="Scazzocchio C."/>
            <person name="Farman M.L."/>
            <person name="Butler J."/>
            <person name="Purcell S."/>
            <person name="Harris S."/>
            <person name="Braus G.H."/>
            <person name="Draht O."/>
            <person name="Busch S."/>
            <person name="D'Enfert C."/>
            <person name="Bouchier C."/>
            <person name="Goldman G.H."/>
            <person name="Bell-Pedersen D."/>
            <person name="Griffiths-Jones S."/>
            <person name="Doonan J.H."/>
            <person name="Yu J."/>
            <person name="Vienken K."/>
            <person name="Pain A."/>
            <person name="Freitag M."/>
            <person name="Selker E.U."/>
            <person name="Archer D.B."/>
            <person name="Penalva M.A."/>
            <person name="Oakley B.R."/>
            <person name="Momany M."/>
            <person name="Tanaka T."/>
            <person name="Kumagai T."/>
            <person name="Asai K."/>
            <person name="Machida M."/>
            <person name="Nierman W.C."/>
            <person name="Denning D.W."/>
            <person name="Caddick M.X."/>
            <person name="Hynes M."/>
            <person name="Paoletti M."/>
            <person name="Fischer R."/>
            <person name="Miller B.L."/>
            <person name="Dyer P.S."/>
            <person name="Sachs M.S."/>
            <person name="Osmani S.A."/>
            <person name="Birren B.W."/>
        </authorList>
    </citation>
    <scope>NUCLEOTIDE SEQUENCE [LARGE SCALE GENOMIC DNA]</scope>
    <source>
        <strain>FGSC A4 / ATCC 38163 / CBS 112.46 / NRRL 194 / M139</strain>
    </source>
</reference>
<reference key="2">
    <citation type="journal article" date="2009" name="Fungal Genet. Biol.">
        <title>The 2008 update of the Aspergillus nidulans genome annotation: a community effort.</title>
        <authorList>
            <person name="Wortman J.R."/>
            <person name="Gilsenan J.M."/>
            <person name="Joardar V."/>
            <person name="Deegan J."/>
            <person name="Clutterbuck J."/>
            <person name="Andersen M.R."/>
            <person name="Archer D."/>
            <person name="Bencina M."/>
            <person name="Braus G."/>
            <person name="Coutinho P."/>
            <person name="von Dohren H."/>
            <person name="Doonan J."/>
            <person name="Driessen A.J."/>
            <person name="Durek P."/>
            <person name="Espeso E."/>
            <person name="Fekete E."/>
            <person name="Flipphi M."/>
            <person name="Estrada C.G."/>
            <person name="Geysens S."/>
            <person name="Goldman G."/>
            <person name="de Groot P.W."/>
            <person name="Hansen K."/>
            <person name="Harris S.D."/>
            <person name="Heinekamp T."/>
            <person name="Helmstaedt K."/>
            <person name="Henrissat B."/>
            <person name="Hofmann G."/>
            <person name="Homan T."/>
            <person name="Horio T."/>
            <person name="Horiuchi H."/>
            <person name="James S."/>
            <person name="Jones M."/>
            <person name="Karaffa L."/>
            <person name="Karanyi Z."/>
            <person name="Kato M."/>
            <person name="Keller N."/>
            <person name="Kelly D.E."/>
            <person name="Kiel J.A."/>
            <person name="Kim J.M."/>
            <person name="van der Klei I.J."/>
            <person name="Klis F.M."/>
            <person name="Kovalchuk A."/>
            <person name="Krasevec N."/>
            <person name="Kubicek C.P."/>
            <person name="Liu B."/>
            <person name="Maccabe A."/>
            <person name="Meyer V."/>
            <person name="Mirabito P."/>
            <person name="Miskei M."/>
            <person name="Mos M."/>
            <person name="Mullins J."/>
            <person name="Nelson D.R."/>
            <person name="Nielsen J."/>
            <person name="Oakley B.R."/>
            <person name="Osmani S.A."/>
            <person name="Pakula T."/>
            <person name="Paszewski A."/>
            <person name="Paulsen I."/>
            <person name="Pilsyk S."/>
            <person name="Pocsi I."/>
            <person name="Punt P.J."/>
            <person name="Ram A.F."/>
            <person name="Ren Q."/>
            <person name="Robellet X."/>
            <person name="Robson G."/>
            <person name="Seiboth B."/>
            <person name="van Solingen P."/>
            <person name="Specht T."/>
            <person name="Sun J."/>
            <person name="Taheri-Talesh N."/>
            <person name="Takeshita N."/>
            <person name="Ussery D."/>
            <person name="vanKuyk P.A."/>
            <person name="Visser H."/>
            <person name="van de Vondervoort P.J."/>
            <person name="de Vries R.P."/>
            <person name="Walton J."/>
            <person name="Xiang X."/>
            <person name="Xiong Y."/>
            <person name="Zeng A.P."/>
            <person name="Brandt B.W."/>
            <person name="Cornell M.J."/>
            <person name="van den Hondel C.A."/>
            <person name="Visser J."/>
            <person name="Oliver S.G."/>
            <person name="Turner G."/>
        </authorList>
    </citation>
    <scope>GENOME REANNOTATION</scope>
    <source>
        <strain>FGSC A4 / ATCC 38163 / CBS 112.46 / NRRL 194 / M139</strain>
    </source>
</reference>
<reference key="3">
    <citation type="journal article" date="2018" name="ACS Chem. Biol.">
        <title>Hybrid transcription factor engineering activates the silent secondary metabolite gene cluster for (+)-asperlin in Aspergillus nidulans.</title>
        <authorList>
            <person name="Grau M.F."/>
            <person name="Entwistle R."/>
            <person name="Chiang Y.M."/>
            <person name="Ahuja M."/>
            <person name="Oakley C.E."/>
            <person name="Akashi T."/>
            <person name="Wang C.C.C."/>
            <person name="Todd R.B."/>
            <person name="Oakley B.R."/>
        </authorList>
    </citation>
    <scope>IDENTIFICATION</scope>
    <scope>DISRUPTION PHENOTYPE</scope>
    <scope>FUNCTION</scope>
    <scope>INDUCTION</scope>
</reference>
<gene>
    <name evidence="4" type="primary">alnE</name>
    <name type="ORF">AN9219.2</name>
</gene>
<feature type="chain" id="PRO_0000445945" description="Efflux pump alnA">
    <location>
        <begin position="1"/>
        <end position="553"/>
    </location>
</feature>
<feature type="transmembrane region" description="Helical" evidence="1">
    <location>
        <begin position="40"/>
        <end position="60"/>
    </location>
</feature>
<feature type="transmembrane region" description="Helical" evidence="1">
    <location>
        <begin position="85"/>
        <end position="105"/>
    </location>
</feature>
<feature type="transmembrane region" description="Helical" evidence="1">
    <location>
        <begin position="110"/>
        <end position="130"/>
    </location>
</feature>
<feature type="transmembrane region" description="Helical" evidence="1">
    <location>
        <begin position="136"/>
        <end position="156"/>
    </location>
</feature>
<feature type="transmembrane region" description="Helical" evidence="1">
    <location>
        <begin position="174"/>
        <end position="194"/>
    </location>
</feature>
<feature type="transmembrane region" description="Helical" evidence="1">
    <location>
        <begin position="202"/>
        <end position="222"/>
    </location>
</feature>
<feature type="transmembrane region" description="Helical" evidence="1">
    <location>
        <begin position="243"/>
        <end position="263"/>
    </location>
</feature>
<feature type="transmembrane region" description="Helical" evidence="1">
    <location>
        <begin position="270"/>
        <end position="290"/>
    </location>
</feature>
<feature type="transmembrane region" description="Helical" evidence="1">
    <location>
        <begin position="319"/>
        <end position="339"/>
    </location>
</feature>
<feature type="transmembrane region" description="Helical" evidence="1">
    <location>
        <begin position="355"/>
        <end position="375"/>
    </location>
</feature>
<feature type="transmembrane region" description="Helical" evidence="1">
    <location>
        <begin position="382"/>
        <end position="402"/>
    </location>
</feature>
<feature type="transmembrane region" description="Helical" evidence="1">
    <location>
        <begin position="413"/>
        <end position="433"/>
    </location>
</feature>
<feature type="transmembrane region" description="Helical" evidence="1">
    <location>
        <begin position="522"/>
        <end position="542"/>
    </location>
</feature>
<feature type="region of interest" description="Disordered" evidence="2">
    <location>
        <begin position="1"/>
        <end position="36"/>
    </location>
</feature>
<feature type="compositionally biased region" description="Basic and acidic residues" evidence="2">
    <location>
        <begin position="1"/>
        <end position="21"/>
    </location>
</feature>
<organism>
    <name type="scientific">Emericella nidulans (strain FGSC A4 / ATCC 38163 / CBS 112.46 / NRRL 194 / M139)</name>
    <name type="common">Aspergillus nidulans</name>
    <dbReference type="NCBI Taxonomy" id="227321"/>
    <lineage>
        <taxon>Eukaryota</taxon>
        <taxon>Fungi</taxon>
        <taxon>Dikarya</taxon>
        <taxon>Ascomycota</taxon>
        <taxon>Pezizomycotina</taxon>
        <taxon>Eurotiomycetes</taxon>
        <taxon>Eurotiomycetidae</taxon>
        <taxon>Eurotiales</taxon>
        <taxon>Aspergillaceae</taxon>
        <taxon>Aspergillus</taxon>
        <taxon>Aspergillus subgen. Nidulantes</taxon>
    </lineage>
</organism>
<proteinExistence type="evidence at transcript level"/>
<name>ALNE_EMENI</name>
<dbReference type="EMBL" id="AACD01000170">
    <property type="protein sequence ID" value="EAA61510.1"/>
    <property type="molecule type" value="Genomic_DNA"/>
</dbReference>
<dbReference type="EMBL" id="BN001306">
    <property type="protein sequence ID" value="CBF82297.1"/>
    <property type="molecule type" value="Genomic_DNA"/>
</dbReference>
<dbReference type="RefSeq" id="XP_682488.1">
    <property type="nucleotide sequence ID" value="XM_677396.1"/>
</dbReference>
<dbReference type="SMR" id="A0A1U8QYH7"/>
<dbReference type="STRING" id="227321.A0A1U8QYH7"/>
<dbReference type="EnsemblFungi" id="CBF82297">
    <property type="protein sequence ID" value="CBF82297"/>
    <property type="gene ID" value="ANIA_09219"/>
</dbReference>
<dbReference type="GeneID" id="2868004"/>
<dbReference type="KEGG" id="ani:ANIA_09219"/>
<dbReference type="VEuPathDB" id="FungiDB:AN9219"/>
<dbReference type="eggNOG" id="KOG0254">
    <property type="taxonomic scope" value="Eukaryota"/>
</dbReference>
<dbReference type="HOGENOM" id="CLU_000960_22_1_1"/>
<dbReference type="InParanoid" id="A0A1U8QYH7"/>
<dbReference type="OMA" id="FGMKWER"/>
<dbReference type="OrthoDB" id="10021397at2759"/>
<dbReference type="Proteomes" id="UP000000560">
    <property type="component" value="Chromosome VI"/>
</dbReference>
<dbReference type="GO" id="GO:0005886">
    <property type="term" value="C:plasma membrane"/>
    <property type="evidence" value="ECO:0000318"/>
    <property type="project" value="GO_Central"/>
</dbReference>
<dbReference type="GO" id="GO:0022857">
    <property type="term" value="F:transmembrane transporter activity"/>
    <property type="evidence" value="ECO:0000318"/>
    <property type="project" value="GO_Central"/>
</dbReference>
<dbReference type="GO" id="GO:0055085">
    <property type="term" value="P:transmembrane transport"/>
    <property type="evidence" value="ECO:0000318"/>
    <property type="project" value="GO_Central"/>
</dbReference>
<dbReference type="FunFam" id="1.20.1250.20:FF:000429">
    <property type="entry name" value="MFS drug efflux transporter, putative"/>
    <property type="match status" value="1"/>
</dbReference>
<dbReference type="FunFam" id="1.20.1720.10:FF:000056">
    <property type="entry name" value="MFS transporter, putative"/>
    <property type="match status" value="1"/>
</dbReference>
<dbReference type="Gene3D" id="1.20.1250.20">
    <property type="entry name" value="MFS general substrate transporter like domains"/>
    <property type="match status" value="2"/>
</dbReference>
<dbReference type="InterPro" id="IPR011701">
    <property type="entry name" value="MFS"/>
</dbReference>
<dbReference type="InterPro" id="IPR020846">
    <property type="entry name" value="MFS_dom"/>
</dbReference>
<dbReference type="InterPro" id="IPR036259">
    <property type="entry name" value="MFS_trans_sf"/>
</dbReference>
<dbReference type="PANTHER" id="PTHR23501:SF163">
    <property type="entry name" value="EFFLUX PUMP ALNA"/>
    <property type="match status" value="1"/>
</dbReference>
<dbReference type="PANTHER" id="PTHR23501">
    <property type="entry name" value="MAJOR FACILITATOR SUPERFAMILY"/>
    <property type="match status" value="1"/>
</dbReference>
<dbReference type="Pfam" id="PF07690">
    <property type="entry name" value="MFS_1"/>
    <property type="match status" value="1"/>
</dbReference>
<dbReference type="SUPFAM" id="SSF103473">
    <property type="entry name" value="MFS general substrate transporter"/>
    <property type="match status" value="1"/>
</dbReference>
<dbReference type="PROSITE" id="PS50850">
    <property type="entry name" value="MFS"/>
    <property type="match status" value="1"/>
</dbReference>
<keyword id="KW-1003">Cell membrane</keyword>
<keyword id="KW-0472">Membrane</keyword>
<keyword id="KW-1185">Reference proteome</keyword>
<keyword id="KW-0812">Transmembrane</keyword>
<keyword id="KW-1133">Transmembrane helix</keyword>
<keyword id="KW-0813">Transport</keyword>
<evidence type="ECO:0000255" key="1"/>
<evidence type="ECO:0000256" key="2">
    <source>
        <dbReference type="SAM" id="MobiDB-lite"/>
    </source>
</evidence>
<evidence type="ECO:0000269" key="3">
    <source>
    </source>
</evidence>
<evidence type="ECO:0000303" key="4">
    <source>
    </source>
</evidence>
<evidence type="ECO:0000305" key="5"/>
<evidence type="ECO:0000305" key="6">
    <source>
    </source>
</evidence>